<gene>
    <name type="primary">argA</name>
    <name type="ordered locus">PP_5185</name>
</gene>
<dbReference type="EC" id="2.3.1.1"/>
<dbReference type="EMBL" id="AE015451">
    <property type="protein sequence ID" value="AAN70750.1"/>
    <property type="molecule type" value="Genomic_DNA"/>
</dbReference>
<dbReference type="RefSeq" id="NP_747286.1">
    <property type="nucleotide sequence ID" value="NC_002947.4"/>
</dbReference>
<dbReference type="RefSeq" id="WP_003253723.1">
    <property type="nucleotide sequence ID" value="NZ_CP169744.1"/>
</dbReference>
<dbReference type="SMR" id="P0A0Z9"/>
<dbReference type="STRING" id="160488.PP_5185"/>
<dbReference type="PaxDb" id="160488-PP_5185"/>
<dbReference type="GeneID" id="83682923"/>
<dbReference type="KEGG" id="ppu:PP_5185"/>
<dbReference type="PATRIC" id="fig|160488.4.peg.5532"/>
<dbReference type="eggNOG" id="COG0548">
    <property type="taxonomic scope" value="Bacteria"/>
</dbReference>
<dbReference type="eggNOG" id="COG1246">
    <property type="taxonomic scope" value="Bacteria"/>
</dbReference>
<dbReference type="HOGENOM" id="CLU_024773_0_0_6"/>
<dbReference type="OrthoDB" id="9802238at2"/>
<dbReference type="PhylomeDB" id="P0A0Z9"/>
<dbReference type="BioCyc" id="PPUT160488:G1G01-5531-MONOMER"/>
<dbReference type="UniPathway" id="UPA00068">
    <property type="reaction ID" value="UER00106"/>
</dbReference>
<dbReference type="Proteomes" id="UP000000556">
    <property type="component" value="Chromosome"/>
</dbReference>
<dbReference type="GO" id="GO:0005737">
    <property type="term" value="C:cytoplasm"/>
    <property type="evidence" value="ECO:0007669"/>
    <property type="project" value="UniProtKB-SubCell"/>
</dbReference>
<dbReference type="GO" id="GO:0004042">
    <property type="term" value="F:L-glutamate N-acetyltransferase activity"/>
    <property type="evidence" value="ECO:0007669"/>
    <property type="project" value="UniProtKB-UniRule"/>
</dbReference>
<dbReference type="GO" id="GO:0006526">
    <property type="term" value="P:L-arginine biosynthetic process"/>
    <property type="evidence" value="ECO:0007669"/>
    <property type="project" value="UniProtKB-UniRule"/>
</dbReference>
<dbReference type="CDD" id="cd04237">
    <property type="entry name" value="AAK_NAGS-ABP"/>
    <property type="match status" value="1"/>
</dbReference>
<dbReference type="CDD" id="cd04301">
    <property type="entry name" value="NAT_SF"/>
    <property type="match status" value="1"/>
</dbReference>
<dbReference type="Gene3D" id="3.40.630.30">
    <property type="match status" value="1"/>
</dbReference>
<dbReference type="Gene3D" id="3.40.1160.10">
    <property type="entry name" value="Acetylglutamate kinase-like"/>
    <property type="match status" value="1"/>
</dbReference>
<dbReference type="HAMAP" id="MF_01105">
    <property type="entry name" value="N_acetyl_glu_synth"/>
    <property type="match status" value="1"/>
</dbReference>
<dbReference type="InterPro" id="IPR036393">
    <property type="entry name" value="AceGlu_kinase-like_sf"/>
</dbReference>
<dbReference type="InterPro" id="IPR016181">
    <property type="entry name" value="Acyl_CoA_acyltransferase"/>
</dbReference>
<dbReference type="InterPro" id="IPR001048">
    <property type="entry name" value="Asp/Glu/Uridylate_kinase"/>
</dbReference>
<dbReference type="InterPro" id="IPR000182">
    <property type="entry name" value="GNAT_dom"/>
</dbReference>
<dbReference type="InterPro" id="IPR033719">
    <property type="entry name" value="NAGS_kin"/>
</dbReference>
<dbReference type="InterPro" id="IPR010167">
    <property type="entry name" value="NH2A_AcTrfase"/>
</dbReference>
<dbReference type="NCBIfam" id="TIGR01890">
    <property type="entry name" value="N-Ac-Glu-synth"/>
    <property type="match status" value="1"/>
</dbReference>
<dbReference type="NCBIfam" id="NF003641">
    <property type="entry name" value="PRK05279.1"/>
    <property type="match status" value="1"/>
</dbReference>
<dbReference type="PANTHER" id="PTHR30602">
    <property type="entry name" value="AMINO-ACID ACETYLTRANSFERASE"/>
    <property type="match status" value="1"/>
</dbReference>
<dbReference type="PANTHER" id="PTHR30602:SF12">
    <property type="entry name" value="AMINO-ACID ACETYLTRANSFERASE NAGS1, CHLOROPLASTIC-RELATED"/>
    <property type="match status" value="1"/>
</dbReference>
<dbReference type="Pfam" id="PF00696">
    <property type="entry name" value="AA_kinase"/>
    <property type="match status" value="1"/>
</dbReference>
<dbReference type="Pfam" id="PF00583">
    <property type="entry name" value="Acetyltransf_1"/>
    <property type="match status" value="1"/>
</dbReference>
<dbReference type="PIRSF" id="PIRSF000423">
    <property type="entry name" value="ArgA"/>
    <property type="match status" value="1"/>
</dbReference>
<dbReference type="SUPFAM" id="SSF55729">
    <property type="entry name" value="Acyl-CoA N-acyltransferases (Nat)"/>
    <property type="match status" value="1"/>
</dbReference>
<dbReference type="SUPFAM" id="SSF53633">
    <property type="entry name" value="Carbamate kinase-like"/>
    <property type="match status" value="1"/>
</dbReference>
<dbReference type="PROSITE" id="PS51186">
    <property type="entry name" value="GNAT"/>
    <property type="match status" value="1"/>
</dbReference>
<comment type="catalytic activity">
    <reaction>
        <text>L-glutamate + acetyl-CoA = N-acetyl-L-glutamate + CoA + H(+)</text>
        <dbReference type="Rhea" id="RHEA:24292"/>
        <dbReference type="ChEBI" id="CHEBI:15378"/>
        <dbReference type="ChEBI" id="CHEBI:29985"/>
        <dbReference type="ChEBI" id="CHEBI:44337"/>
        <dbReference type="ChEBI" id="CHEBI:57287"/>
        <dbReference type="ChEBI" id="CHEBI:57288"/>
        <dbReference type="EC" id="2.3.1.1"/>
    </reaction>
</comment>
<comment type="pathway">
    <text>Amino-acid biosynthesis; L-arginine biosynthesis; N(2)-acetyl-L-ornithine from L-glutamate: step 1/4.</text>
</comment>
<comment type="subcellular location">
    <subcellularLocation>
        <location evidence="1">Cytoplasm</location>
    </subcellularLocation>
</comment>
<comment type="similarity">
    <text evidence="2">Belongs to the acetyltransferase family. ArgA subfamily.</text>
</comment>
<sequence>MPDYVNWLRHASPYINAHRDCTFVVMLPGDGVEHPNFGNIVHDLVLLHSLGVRLVLVHGSRPQIESRLADRGLTPHYHRGMRITDAATLDCVIDAVGALRLAIEARLSMDIAASPMQGSRLRVASGNLVTARPIGVLEGVDYHHTGEVRRVDRKGISRLLDERSIVLLSPLGYSPTGEIFNLACEDVATRAAIELGADKLLLFGAEPGLLDADGRLVRELRPQQVAPHLQRLGSDYQGELLDAAAEACKGGVARSHIVSYAEDGALLTELFTRGGGGTLVSQEQFEVVREATIEDVGGLLELISPLEEQGILVRRSREVLEREIEQFSVVEREGMIIACAALYPIADSEAGELACLAVNPEYRHGGRGDELLERIESRARQMGLSTLFVLTTRTAHWFRERGFAPSGVERLPAARASLYNYQRNSKIFEKPL</sequence>
<name>ARGA_PSEPK</name>
<protein>
    <recommendedName>
        <fullName>Amino-acid acetyltransferase</fullName>
        <ecNumber>2.3.1.1</ecNumber>
    </recommendedName>
    <alternativeName>
        <fullName>N-acetylglutamate synthase</fullName>
        <shortName>AGS</shortName>
        <shortName>NAGS</shortName>
    </alternativeName>
</protein>
<accession>P0A0Z9</accession>
<accession>P32042</accession>
<feature type="chain" id="PRO_0000186799" description="Amino-acid acetyltransferase">
    <location>
        <begin position="1"/>
        <end position="432"/>
    </location>
</feature>
<feature type="domain" description="N-acetyltransferase">
    <location>
        <begin position="286"/>
        <end position="432"/>
    </location>
</feature>
<proteinExistence type="inferred from homology"/>
<organism>
    <name type="scientific">Pseudomonas putida (strain ATCC 47054 / DSM 6125 / CFBP 8728 / NCIMB 11950 / KT2440)</name>
    <dbReference type="NCBI Taxonomy" id="160488"/>
    <lineage>
        <taxon>Bacteria</taxon>
        <taxon>Pseudomonadati</taxon>
        <taxon>Pseudomonadota</taxon>
        <taxon>Gammaproteobacteria</taxon>
        <taxon>Pseudomonadales</taxon>
        <taxon>Pseudomonadaceae</taxon>
        <taxon>Pseudomonas</taxon>
    </lineage>
</organism>
<keyword id="KW-0012">Acyltransferase</keyword>
<keyword id="KW-0028">Amino-acid biosynthesis</keyword>
<keyword id="KW-0055">Arginine biosynthesis</keyword>
<keyword id="KW-0963">Cytoplasm</keyword>
<keyword id="KW-1185">Reference proteome</keyword>
<keyword id="KW-0808">Transferase</keyword>
<reference key="1">
    <citation type="journal article" date="2002" name="Environ. Microbiol.">
        <title>Complete genome sequence and comparative analysis of the metabolically versatile Pseudomonas putida KT2440.</title>
        <authorList>
            <person name="Nelson K.E."/>
            <person name="Weinel C."/>
            <person name="Paulsen I.T."/>
            <person name="Dodson R.J."/>
            <person name="Hilbert H."/>
            <person name="Martins dos Santos V.A.P."/>
            <person name="Fouts D.E."/>
            <person name="Gill S.R."/>
            <person name="Pop M."/>
            <person name="Holmes M."/>
            <person name="Brinkac L.M."/>
            <person name="Beanan M.J."/>
            <person name="DeBoy R.T."/>
            <person name="Daugherty S.C."/>
            <person name="Kolonay J.F."/>
            <person name="Madupu R."/>
            <person name="Nelson W.C."/>
            <person name="White O."/>
            <person name="Peterson J.D."/>
            <person name="Khouri H.M."/>
            <person name="Hance I."/>
            <person name="Chris Lee P."/>
            <person name="Holtzapple E.K."/>
            <person name="Scanlan D."/>
            <person name="Tran K."/>
            <person name="Moazzez A."/>
            <person name="Utterback T.R."/>
            <person name="Rizzo M."/>
            <person name="Lee K."/>
            <person name="Kosack D."/>
            <person name="Moestl D."/>
            <person name="Wedler H."/>
            <person name="Lauber J."/>
            <person name="Stjepandic D."/>
            <person name="Hoheisel J."/>
            <person name="Straetz M."/>
            <person name="Heim S."/>
            <person name="Kiewitz C."/>
            <person name="Eisen J.A."/>
            <person name="Timmis K.N."/>
            <person name="Duesterhoeft A."/>
            <person name="Tuemmler B."/>
            <person name="Fraser C.M."/>
        </authorList>
    </citation>
    <scope>NUCLEOTIDE SEQUENCE [LARGE SCALE GENOMIC DNA]</scope>
    <source>
        <strain>ATCC 47054 / DSM 6125 / CFBP 8728 / NCIMB 11950 / KT2440</strain>
    </source>
</reference>
<evidence type="ECO:0000250" key="1"/>
<evidence type="ECO:0000305" key="2"/>